<accession>Q1CGF1</accession>
<accession>C4GVU4</accession>
<gene>
    <name evidence="1" type="primary">serS</name>
    <name type="ordered locus">YPN_2601</name>
    <name type="ORF">YP516_2929</name>
</gene>
<sequence>MLDPNMLRNELDAVAEKLARRGFKLDVEVLRQQEERRKVLQVETESLQAERNSRSKQIGAAKARGEDIEPLRLEVNALGEKLDAAKAELDKLQNEIRDLALSIPNLPDDSVPVGKNENDNIEVSRWGEPRKYDFDVKDHVSLGEMAGGLDFAAAVKLTGARFVVMKGQIARMHRALSQFMLDLHTEKHGYLEAYVPYLVNHATLYGTGQLPKFGEDLFHTKPLAEESDNSNYALIPTAEVPLTNLVRDEILEEDSLPLKLTAHTPCFRSEAGSYGRDTRGLIRMHQFDKVEMVQITRPEDSMAALEELTGHAEKVLQLLELPYRKVLLCTGDMGFGSSKTYDLEVWLPAQDTYREISSCSNMWDFQARRMQARYRNKTDRKTRLVHTLNGSGLAVGRTLVAVLENYQQADGRIQVPDVLRPYMGGLEYIG</sequence>
<proteinExistence type="inferred from homology"/>
<comment type="function">
    <text evidence="1">Catalyzes the attachment of serine to tRNA(Ser). Is also able to aminoacylate tRNA(Sec) with serine, to form the misacylated tRNA L-seryl-tRNA(Sec), which will be further converted into selenocysteinyl-tRNA(Sec).</text>
</comment>
<comment type="catalytic activity">
    <reaction evidence="1">
        <text>tRNA(Ser) + L-serine + ATP = L-seryl-tRNA(Ser) + AMP + diphosphate + H(+)</text>
        <dbReference type="Rhea" id="RHEA:12292"/>
        <dbReference type="Rhea" id="RHEA-COMP:9669"/>
        <dbReference type="Rhea" id="RHEA-COMP:9703"/>
        <dbReference type="ChEBI" id="CHEBI:15378"/>
        <dbReference type="ChEBI" id="CHEBI:30616"/>
        <dbReference type="ChEBI" id="CHEBI:33019"/>
        <dbReference type="ChEBI" id="CHEBI:33384"/>
        <dbReference type="ChEBI" id="CHEBI:78442"/>
        <dbReference type="ChEBI" id="CHEBI:78533"/>
        <dbReference type="ChEBI" id="CHEBI:456215"/>
        <dbReference type="EC" id="6.1.1.11"/>
    </reaction>
</comment>
<comment type="catalytic activity">
    <reaction evidence="1">
        <text>tRNA(Sec) + L-serine + ATP = L-seryl-tRNA(Sec) + AMP + diphosphate + H(+)</text>
        <dbReference type="Rhea" id="RHEA:42580"/>
        <dbReference type="Rhea" id="RHEA-COMP:9742"/>
        <dbReference type="Rhea" id="RHEA-COMP:10128"/>
        <dbReference type="ChEBI" id="CHEBI:15378"/>
        <dbReference type="ChEBI" id="CHEBI:30616"/>
        <dbReference type="ChEBI" id="CHEBI:33019"/>
        <dbReference type="ChEBI" id="CHEBI:33384"/>
        <dbReference type="ChEBI" id="CHEBI:78442"/>
        <dbReference type="ChEBI" id="CHEBI:78533"/>
        <dbReference type="ChEBI" id="CHEBI:456215"/>
        <dbReference type="EC" id="6.1.1.11"/>
    </reaction>
</comment>
<comment type="pathway">
    <text evidence="1">Aminoacyl-tRNA biosynthesis; selenocysteinyl-tRNA(Sec) biosynthesis; L-seryl-tRNA(Sec) from L-serine and tRNA(Sec): step 1/1.</text>
</comment>
<comment type="subunit">
    <text evidence="1">Homodimer. The tRNA molecule binds across the dimer.</text>
</comment>
<comment type="subcellular location">
    <subcellularLocation>
        <location evidence="1">Cytoplasm</location>
    </subcellularLocation>
</comment>
<comment type="domain">
    <text evidence="1">Consists of two distinct domains, a catalytic core and a N-terminal extension that is involved in tRNA binding.</text>
</comment>
<comment type="similarity">
    <text evidence="1">Belongs to the class-II aminoacyl-tRNA synthetase family. Type-1 seryl-tRNA synthetase subfamily.</text>
</comment>
<name>SYS_YERPN</name>
<reference key="1">
    <citation type="journal article" date="2006" name="J. Bacteriol.">
        <title>Complete genome sequence of Yersinia pestis strains Antiqua and Nepal516: evidence of gene reduction in an emerging pathogen.</title>
        <authorList>
            <person name="Chain P.S.G."/>
            <person name="Hu P."/>
            <person name="Malfatti S.A."/>
            <person name="Radnedge L."/>
            <person name="Larimer F."/>
            <person name="Vergez L.M."/>
            <person name="Worsham P."/>
            <person name="Chu M.C."/>
            <person name="Andersen G.L."/>
        </authorList>
    </citation>
    <scope>NUCLEOTIDE SEQUENCE [LARGE SCALE GENOMIC DNA]</scope>
    <source>
        <strain>Nepal516</strain>
    </source>
</reference>
<reference key="2">
    <citation type="submission" date="2009-04" db="EMBL/GenBank/DDBJ databases">
        <title>Yersinia pestis Nepal516A whole genome shotgun sequencing project.</title>
        <authorList>
            <person name="Plunkett G. III"/>
            <person name="Anderson B.D."/>
            <person name="Baumler D.J."/>
            <person name="Burland V."/>
            <person name="Cabot E.L."/>
            <person name="Glasner J.D."/>
            <person name="Mau B."/>
            <person name="Neeno-Eckwall E."/>
            <person name="Perna N.T."/>
            <person name="Munk A.C."/>
            <person name="Tapia R."/>
            <person name="Green L.D."/>
            <person name="Rogers Y.C."/>
            <person name="Detter J.C."/>
            <person name="Bruce D.C."/>
            <person name="Brettin T.S."/>
        </authorList>
    </citation>
    <scope>NUCLEOTIDE SEQUENCE [LARGE SCALE GENOMIC DNA]</scope>
    <source>
        <strain>Nepal516</strain>
    </source>
</reference>
<feature type="chain" id="PRO_1000019871" description="Serine--tRNA ligase">
    <location>
        <begin position="1"/>
        <end position="430"/>
    </location>
</feature>
<feature type="binding site" evidence="1">
    <location>
        <begin position="237"/>
        <end position="239"/>
    </location>
    <ligand>
        <name>L-serine</name>
        <dbReference type="ChEBI" id="CHEBI:33384"/>
    </ligand>
</feature>
<feature type="binding site" evidence="1">
    <location>
        <begin position="268"/>
        <end position="270"/>
    </location>
    <ligand>
        <name>ATP</name>
        <dbReference type="ChEBI" id="CHEBI:30616"/>
    </ligand>
</feature>
<feature type="binding site" evidence="1">
    <location>
        <position position="291"/>
    </location>
    <ligand>
        <name>L-serine</name>
        <dbReference type="ChEBI" id="CHEBI:33384"/>
    </ligand>
</feature>
<feature type="binding site" evidence="1">
    <location>
        <begin position="355"/>
        <end position="358"/>
    </location>
    <ligand>
        <name>ATP</name>
        <dbReference type="ChEBI" id="CHEBI:30616"/>
    </ligand>
</feature>
<feature type="binding site" evidence="1">
    <location>
        <position position="391"/>
    </location>
    <ligand>
        <name>L-serine</name>
        <dbReference type="ChEBI" id="CHEBI:33384"/>
    </ligand>
</feature>
<organism>
    <name type="scientific">Yersinia pestis bv. Antiqua (strain Nepal516)</name>
    <dbReference type="NCBI Taxonomy" id="377628"/>
    <lineage>
        <taxon>Bacteria</taxon>
        <taxon>Pseudomonadati</taxon>
        <taxon>Pseudomonadota</taxon>
        <taxon>Gammaproteobacteria</taxon>
        <taxon>Enterobacterales</taxon>
        <taxon>Yersiniaceae</taxon>
        <taxon>Yersinia</taxon>
    </lineage>
</organism>
<protein>
    <recommendedName>
        <fullName evidence="1">Serine--tRNA ligase</fullName>
        <ecNumber evidence="1">6.1.1.11</ecNumber>
    </recommendedName>
    <alternativeName>
        <fullName evidence="1">Seryl-tRNA synthetase</fullName>
        <shortName evidence="1">SerRS</shortName>
    </alternativeName>
    <alternativeName>
        <fullName evidence="1">Seryl-tRNA(Ser/Sec) synthetase</fullName>
    </alternativeName>
</protein>
<dbReference type="EC" id="6.1.1.11" evidence="1"/>
<dbReference type="EMBL" id="CP000305">
    <property type="protein sequence ID" value="ABG18929.1"/>
    <property type="molecule type" value="Genomic_DNA"/>
</dbReference>
<dbReference type="EMBL" id="ACNQ01000017">
    <property type="protein sequence ID" value="EEO75044.1"/>
    <property type="molecule type" value="Genomic_DNA"/>
</dbReference>
<dbReference type="RefSeq" id="WP_002211336.1">
    <property type="nucleotide sequence ID" value="NZ_ACNQ01000017.1"/>
</dbReference>
<dbReference type="SMR" id="Q1CGF1"/>
<dbReference type="GeneID" id="57977175"/>
<dbReference type="KEGG" id="ypn:YPN_2601"/>
<dbReference type="HOGENOM" id="CLU_023797_1_1_6"/>
<dbReference type="UniPathway" id="UPA00906">
    <property type="reaction ID" value="UER00895"/>
</dbReference>
<dbReference type="Proteomes" id="UP000008936">
    <property type="component" value="Chromosome"/>
</dbReference>
<dbReference type="GO" id="GO:0005737">
    <property type="term" value="C:cytoplasm"/>
    <property type="evidence" value="ECO:0007669"/>
    <property type="project" value="UniProtKB-SubCell"/>
</dbReference>
<dbReference type="GO" id="GO:0005524">
    <property type="term" value="F:ATP binding"/>
    <property type="evidence" value="ECO:0007669"/>
    <property type="project" value="UniProtKB-UniRule"/>
</dbReference>
<dbReference type="GO" id="GO:0004828">
    <property type="term" value="F:serine-tRNA ligase activity"/>
    <property type="evidence" value="ECO:0007669"/>
    <property type="project" value="UniProtKB-UniRule"/>
</dbReference>
<dbReference type="GO" id="GO:0016260">
    <property type="term" value="P:selenocysteine biosynthetic process"/>
    <property type="evidence" value="ECO:0007669"/>
    <property type="project" value="UniProtKB-UniRule"/>
</dbReference>
<dbReference type="GO" id="GO:0006434">
    <property type="term" value="P:seryl-tRNA aminoacylation"/>
    <property type="evidence" value="ECO:0007669"/>
    <property type="project" value="UniProtKB-UniRule"/>
</dbReference>
<dbReference type="CDD" id="cd00770">
    <property type="entry name" value="SerRS_core"/>
    <property type="match status" value="1"/>
</dbReference>
<dbReference type="FunFam" id="1.10.287.40:FF:000001">
    <property type="entry name" value="Serine--tRNA ligase"/>
    <property type="match status" value="1"/>
</dbReference>
<dbReference type="FunFam" id="3.30.930.10:FF:000018">
    <property type="entry name" value="Serine--tRNA ligase"/>
    <property type="match status" value="1"/>
</dbReference>
<dbReference type="Gene3D" id="3.30.930.10">
    <property type="entry name" value="Bira Bifunctional Protein, Domain 2"/>
    <property type="match status" value="1"/>
</dbReference>
<dbReference type="Gene3D" id="1.10.287.40">
    <property type="entry name" value="Serine-tRNA synthetase, tRNA binding domain"/>
    <property type="match status" value="1"/>
</dbReference>
<dbReference type="HAMAP" id="MF_00176">
    <property type="entry name" value="Ser_tRNA_synth_type1"/>
    <property type="match status" value="1"/>
</dbReference>
<dbReference type="InterPro" id="IPR002314">
    <property type="entry name" value="aa-tRNA-synt_IIb"/>
</dbReference>
<dbReference type="InterPro" id="IPR006195">
    <property type="entry name" value="aa-tRNA-synth_II"/>
</dbReference>
<dbReference type="InterPro" id="IPR045864">
    <property type="entry name" value="aa-tRNA-synth_II/BPL/LPL"/>
</dbReference>
<dbReference type="InterPro" id="IPR002317">
    <property type="entry name" value="Ser-tRNA-ligase_type_1"/>
</dbReference>
<dbReference type="InterPro" id="IPR015866">
    <property type="entry name" value="Ser-tRNA-synth_1_N"/>
</dbReference>
<dbReference type="InterPro" id="IPR042103">
    <property type="entry name" value="SerRS_1_N_sf"/>
</dbReference>
<dbReference type="InterPro" id="IPR033729">
    <property type="entry name" value="SerRS_core"/>
</dbReference>
<dbReference type="InterPro" id="IPR010978">
    <property type="entry name" value="tRNA-bd_arm"/>
</dbReference>
<dbReference type="NCBIfam" id="TIGR00414">
    <property type="entry name" value="serS"/>
    <property type="match status" value="1"/>
</dbReference>
<dbReference type="PANTHER" id="PTHR43697:SF1">
    <property type="entry name" value="SERINE--TRNA LIGASE"/>
    <property type="match status" value="1"/>
</dbReference>
<dbReference type="PANTHER" id="PTHR43697">
    <property type="entry name" value="SERYL-TRNA SYNTHETASE"/>
    <property type="match status" value="1"/>
</dbReference>
<dbReference type="Pfam" id="PF02403">
    <property type="entry name" value="Seryl_tRNA_N"/>
    <property type="match status" value="1"/>
</dbReference>
<dbReference type="Pfam" id="PF00587">
    <property type="entry name" value="tRNA-synt_2b"/>
    <property type="match status" value="1"/>
</dbReference>
<dbReference type="PIRSF" id="PIRSF001529">
    <property type="entry name" value="Ser-tRNA-synth_IIa"/>
    <property type="match status" value="1"/>
</dbReference>
<dbReference type="PRINTS" id="PR00981">
    <property type="entry name" value="TRNASYNTHSER"/>
</dbReference>
<dbReference type="SUPFAM" id="SSF55681">
    <property type="entry name" value="Class II aaRS and biotin synthetases"/>
    <property type="match status" value="1"/>
</dbReference>
<dbReference type="SUPFAM" id="SSF46589">
    <property type="entry name" value="tRNA-binding arm"/>
    <property type="match status" value="1"/>
</dbReference>
<dbReference type="PROSITE" id="PS50862">
    <property type="entry name" value="AA_TRNA_LIGASE_II"/>
    <property type="match status" value="1"/>
</dbReference>
<evidence type="ECO:0000255" key="1">
    <source>
        <dbReference type="HAMAP-Rule" id="MF_00176"/>
    </source>
</evidence>
<keyword id="KW-0030">Aminoacyl-tRNA synthetase</keyword>
<keyword id="KW-0067">ATP-binding</keyword>
<keyword id="KW-0963">Cytoplasm</keyword>
<keyword id="KW-0436">Ligase</keyword>
<keyword id="KW-0547">Nucleotide-binding</keyword>
<keyword id="KW-0648">Protein biosynthesis</keyword>